<name>BR1B_LITST</name>
<dbReference type="GO" id="GO:0005576">
    <property type="term" value="C:extracellular region"/>
    <property type="evidence" value="ECO:0007669"/>
    <property type="project" value="UniProtKB-SubCell"/>
</dbReference>
<dbReference type="GO" id="GO:0042742">
    <property type="term" value="P:defense response to bacterium"/>
    <property type="evidence" value="ECO:0007669"/>
    <property type="project" value="UniProtKB-KW"/>
</dbReference>
<dbReference type="GO" id="GO:0050832">
    <property type="term" value="P:defense response to fungus"/>
    <property type="evidence" value="ECO:0007669"/>
    <property type="project" value="UniProtKB-KW"/>
</dbReference>
<dbReference type="GO" id="GO:0031640">
    <property type="term" value="P:killing of cells of another organism"/>
    <property type="evidence" value="ECO:0007669"/>
    <property type="project" value="UniProtKB-KW"/>
</dbReference>
<dbReference type="InterPro" id="IPR012520">
    <property type="entry name" value="Antimicrobial_frog_1"/>
</dbReference>
<dbReference type="Pfam" id="PF08018">
    <property type="entry name" value="Antimicrobial_1"/>
    <property type="match status" value="1"/>
</dbReference>
<comment type="function">
    <text evidence="1">Antimicrobial peptide with activity against Gram-negative and Gram-positive bacteria (MIC=50 uM against E.coli, MIC=6 uM against S.aureus) and fungi (MIC=13 uM against C.albicans) (PubMed:15556063). Shows hemolytic activity on human erythrocytes (HC(50)=25 uM) (PubMed:15556063).</text>
</comment>
<comment type="subcellular location">
    <subcellularLocation>
        <location evidence="1">Secreted</location>
    </subcellularLocation>
</comment>
<comment type="tissue specificity">
    <text evidence="4">Expressed by the skin glands.</text>
</comment>
<comment type="developmental stage">
    <text evidence="4">Is equally expressed in juvenile and adult (male and female) frogs.</text>
</comment>
<comment type="mass spectrometry"/>
<comment type="similarity">
    <text evidence="3">Belongs to the frog skin active peptide (FSAP) family. Brevinin subfamily.</text>
</comment>
<comment type="online information" name="The antimicrobial peptide database">
    <link uri="https://wangapd3.com/database/query_output.php?ID=01439"/>
</comment>
<feature type="peptide" id="PRO_0000449477" description="Brevinin-1SPb" evidence="1">
    <location>
        <begin position="1"/>
        <end position="20"/>
    </location>
</feature>
<feature type="disulfide bond" evidence="1">
    <location>
        <begin position="14"/>
        <end position="20"/>
    </location>
</feature>
<proteinExistence type="evidence at protein level"/>
<evidence type="ECO:0000269" key="1">
    <source>
    </source>
</evidence>
<evidence type="ECO:0000303" key="2">
    <source>
    </source>
</evidence>
<evidence type="ECO:0000305" key="3"/>
<evidence type="ECO:0000305" key="4">
    <source>
    </source>
</evidence>
<organism>
    <name type="scientific">Lithobates septentrionalis</name>
    <name type="common">Mink frog</name>
    <name type="synonym">Rana septentrionalis</name>
    <dbReference type="NCBI Taxonomy" id="190274"/>
    <lineage>
        <taxon>Eukaryota</taxon>
        <taxon>Metazoa</taxon>
        <taxon>Chordata</taxon>
        <taxon>Craniata</taxon>
        <taxon>Vertebrata</taxon>
        <taxon>Euteleostomi</taxon>
        <taxon>Amphibia</taxon>
        <taxon>Batrachia</taxon>
        <taxon>Anura</taxon>
        <taxon>Neobatrachia</taxon>
        <taxon>Ranoidea</taxon>
        <taxon>Ranidae</taxon>
        <taxon>Lithobates</taxon>
    </lineage>
</organism>
<reference key="1">
    <citation type="journal article" date="2004" name="Comp. Biochem. Physiol.">
        <title>Purification and characterization of antimicrobial peptides from the skin secretions of the mink frog (Rana septentrionalis).</title>
        <authorList>
            <person name="Bevier C.R."/>
            <person name="Sonnevend A."/>
            <person name="Kolodziejek J."/>
            <person name="Nowotny N."/>
            <person name="Nielsen P.F."/>
            <person name="Conlon J.M."/>
        </authorList>
    </citation>
    <scope>PROTEIN SEQUENCE</scope>
    <scope>SUBCELLULAR LOCATION</scope>
    <scope>MASS SPECTROMETRY</scope>
    <scope>DEVELOPMENTAL STAGE</scope>
    <scope>DISULFIDE BOND</scope>
    <source>
        <tissue>Skin secretion</tissue>
    </source>
</reference>
<accession>P0DQK0</accession>
<keyword id="KW-0878">Amphibian defense peptide</keyword>
<keyword id="KW-0044">Antibiotic</keyword>
<keyword id="KW-0929">Antimicrobial</keyword>
<keyword id="KW-0204">Cytolysis</keyword>
<keyword id="KW-0903">Direct protein sequencing</keyword>
<keyword id="KW-1015">Disulfide bond</keyword>
<keyword id="KW-0295">Fungicide</keyword>
<keyword id="KW-0354">Hemolysis</keyword>
<keyword id="KW-0964">Secreted</keyword>
<sequence>FLPIIAGMAAKVICAITKKC</sequence>
<protein>
    <recommendedName>
        <fullName evidence="2">Brevinin-1SPb</fullName>
    </recommendedName>
</protein>